<protein>
    <recommendedName>
        <fullName evidence="1">6,7-dimethyl-8-ribityllumazine synthase</fullName>
        <shortName evidence="1">DMRL synthase</shortName>
        <shortName evidence="1">LS</shortName>
        <shortName evidence="1">Lumazine synthase</shortName>
        <ecNumber evidence="1">2.5.1.78</ecNumber>
    </recommendedName>
</protein>
<proteinExistence type="inferred from homology"/>
<gene>
    <name evidence="1" type="primary">ribH</name>
    <name type="ordered locus">YPN_0906</name>
    <name type="ORF">YP516_0981</name>
</gene>
<sequence>MNVIEGVVATPNARVAIAIARFNNFINDSLLDGAIDALKRIGQVSDDNITVVWVPGAYELPLVANVLAKTNRYDAVIALGTVIRGGTAHFEYVAGEASSGLSSVAMNSDIPVAFGVLTTESIEQAIERAGTKAGNKGAEAALTALEMINVIKAIKG</sequence>
<evidence type="ECO:0000255" key="1">
    <source>
        <dbReference type="HAMAP-Rule" id="MF_00178"/>
    </source>
</evidence>
<organism>
    <name type="scientific">Yersinia pestis bv. Antiqua (strain Nepal516)</name>
    <dbReference type="NCBI Taxonomy" id="377628"/>
    <lineage>
        <taxon>Bacteria</taxon>
        <taxon>Pseudomonadati</taxon>
        <taxon>Pseudomonadota</taxon>
        <taxon>Gammaproteobacteria</taxon>
        <taxon>Enterobacterales</taxon>
        <taxon>Yersiniaceae</taxon>
        <taxon>Yersinia</taxon>
    </lineage>
</organism>
<feature type="chain" id="PRO_1000040553" description="6,7-dimethyl-8-ribityllumazine synthase">
    <location>
        <begin position="1"/>
        <end position="156"/>
    </location>
</feature>
<feature type="active site" description="Proton donor" evidence="1">
    <location>
        <position position="89"/>
    </location>
</feature>
<feature type="binding site" evidence="1">
    <location>
        <position position="22"/>
    </location>
    <ligand>
        <name>5-amino-6-(D-ribitylamino)uracil</name>
        <dbReference type="ChEBI" id="CHEBI:15934"/>
    </ligand>
</feature>
<feature type="binding site" evidence="1">
    <location>
        <begin position="57"/>
        <end position="59"/>
    </location>
    <ligand>
        <name>5-amino-6-(D-ribitylamino)uracil</name>
        <dbReference type="ChEBI" id="CHEBI:15934"/>
    </ligand>
</feature>
<feature type="binding site" evidence="1">
    <location>
        <begin position="81"/>
        <end position="83"/>
    </location>
    <ligand>
        <name>5-amino-6-(D-ribitylamino)uracil</name>
        <dbReference type="ChEBI" id="CHEBI:15934"/>
    </ligand>
</feature>
<feature type="binding site" evidence="1">
    <location>
        <begin position="86"/>
        <end position="87"/>
    </location>
    <ligand>
        <name>(2S)-2-hydroxy-3-oxobutyl phosphate</name>
        <dbReference type="ChEBI" id="CHEBI:58830"/>
    </ligand>
</feature>
<feature type="binding site" evidence="1">
    <location>
        <position position="114"/>
    </location>
    <ligand>
        <name>5-amino-6-(D-ribitylamino)uracil</name>
        <dbReference type="ChEBI" id="CHEBI:15934"/>
    </ligand>
</feature>
<feature type="binding site" evidence="1">
    <location>
        <position position="128"/>
    </location>
    <ligand>
        <name>(2S)-2-hydroxy-3-oxobutyl phosphate</name>
        <dbReference type="ChEBI" id="CHEBI:58830"/>
    </ligand>
</feature>
<accession>Q1CL92</accession>
<accession>C4GQI0</accession>
<dbReference type="EC" id="2.5.1.78" evidence="1"/>
<dbReference type="EMBL" id="CP000305">
    <property type="protein sequence ID" value="ABG17238.1"/>
    <property type="molecule type" value="Genomic_DNA"/>
</dbReference>
<dbReference type="EMBL" id="ACNQ01000008">
    <property type="protein sequence ID" value="EEO77321.1"/>
    <property type="molecule type" value="Genomic_DNA"/>
</dbReference>
<dbReference type="SMR" id="Q1CL92"/>
<dbReference type="KEGG" id="ypn:YPN_0906"/>
<dbReference type="HOGENOM" id="CLU_089358_1_1_6"/>
<dbReference type="UniPathway" id="UPA00275">
    <property type="reaction ID" value="UER00404"/>
</dbReference>
<dbReference type="Proteomes" id="UP000008936">
    <property type="component" value="Chromosome"/>
</dbReference>
<dbReference type="GO" id="GO:0005829">
    <property type="term" value="C:cytosol"/>
    <property type="evidence" value="ECO:0007669"/>
    <property type="project" value="TreeGrafter"/>
</dbReference>
<dbReference type="GO" id="GO:0009349">
    <property type="term" value="C:riboflavin synthase complex"/>
    <property type="evidence" value="ECO:0007669"/>
    <property type="project" value="InterPro"/>
</dbReference>
<dbReference type="GO" id="GO:0000906">
    <property type="term" value="F:6,7-dimethyl-8-ribityllumazine synthase activity"/>
    <property type="evidence" value="ECO:0007669"/>
    <property type="project" value="UniProtKB-UniRule"/>
</dbReference>
<dbReference type="GO" id="GO:0009231">
    <property type="term" value="P:riboflavin biosynthetic process"/>
    <property type="evidence" value="ECO:0007669"/>
    <property type="project" value="UniProtKB-UniRule"/>
</dbReference>
<dbReference type="CDD" id="cd09209">
    <property type="entry name" value="Lumazine_synthase-I"/>
    <property type="match status" value="1"/>
</dbReference>
<dbReference type="FunFam" id="3.40.50.960:FF:000001">
    <property type="entry name" value="6,7-dimethyl-8-ribityllumazine synthase"/>
    <property type="match status" value="1"/>
</dbReference>
<dbReference type="Gene3D" id="3.40.50.960">
    <property type="entry name" value="Lumazine/riboflavin synthase"/>
    <property type="match status" value="1"/>
</dbReference>
<dbReference type="HAMAP" id="MF_00178">
    <property type="entry name" value="Lumazine_synth"/>
    <property type="match status" value="1"/>
</dbReference>
<dbReference type="InterPro" id="IPR034964">
    <property type="entry name" value="LS"/>
</dbReference>
<dbReference type="InterPro" id="IPR002180">
    <property type="entry name" value="LS/RS"/>
</dbReference>
<dbReference type="InterPro" id="IPR036467">
    <property type="entry name" value="LS/RS_sf"/>
</dbReference>
<dbReference type="NCBIfam" id="TIGR00114">
    <property type="entry name" value="lumazine-synth"/>
    <property type="match status" value="1"/>
</dbReference>
<dbReference type="NCBIfam" id="NF000812">
    <property type="entry name" value="PRK00061.1-4"/>
    <property type="match status" value="1"/>
</dbReference>
<dbReference type="PANTHER" id="PTHR21058:SF0">
    <property type="entry name" value="6,7-DIMETHYL-8-RIBITYLLUMAZINE SYNTHASE"/>
    <property type="match status" value="1"/>
</dbReference>
<dbReference type="PANTHER" id="PTHR21058">
    <property type="entry name" value="6,7-DIMETHYL-8-RIBITYLLUMAZINE SYNTHASE DMRL SYNTHASE LUMAZINE SYNTHASE"/>
    <property type="match status" value="1"/>
</dbReference>
<dbReference type="Pfam" id="PF00885">
    <property type="entry name" value="DMRL_synthase"/>
    <property type="match status" value="1"/>
</dbReference>
<dbReference type="SUPFAM" id="SSF52121">
    <property type="entry name" value="Lumazine synthase"/>
    <property type="match status" value="1"/>
</dbReference>
<name>RISB_YERPN</name>
<comment type="function">
    <text evidence="1">Catalyzes the formation of 6,7-dimethyl-8-ribityllumazine by condensation of 5-amino-6-(D-ribitylamino)uracil with 3,4-dihydroxy-2-butanone 4-phosphate. This is the penultimate step in the biosynthesis of riboflavin.</text>
</comment>
<comment type="catalytic activity">
    <reaction evidence="1">
        <text>(2S)-2-hydroxy-3-oxobutyl phosphate + 5-amino-6-(D-ribitylamino)uracil = 6,7-dimethyl-8-(1-D-ribityl)lumazine + phosphate + 2 H2O + H(+)</text>
        <dbReference type="Rhea" id="RHEA:26152"/>
        <dbReference type="ChEBI" id="CHEBI:15377"/>
        <dbReference type="ChEBI" id="CHEBI:15378"/>
        <dbReference type="ChEBI" id="CHEBI:15934"/>
        <dbReference type="ChEBI" id="CHEBI:43474"/>
        <dbReference type="ChEBI" id="CHEBI:58201"/>
        <dbReference type="ChEBI" id="CHEBI:58830"/>
        <dbReference type="EC" id="2.5.1.78"/>
    </reaction>
</comment>
<comment type="pathway">
    <text evidence="1">Cofactor biosynthesis; riboflavin biosynthesis; riboflavin from 2-hydroxy-3-oxobutyl phosphate and 5-amino-6-(D-ribitylamino)uracil: step 1/2.</text>
</comment>
<comment type="subunit">
    <text evidence="1">Forms an icosahedral capsid composed of 60 subunits, arranged as a dodecamer of pentamers.</text>
</comment>
<comment type="similarity">
    <text evidence="1">Belongs to the DMRL synthase family.</text>
</comment>
<reference key="1">
    <citation type="journal article" date="2006" name="J. Bacteriol.">
        <title>Complete genome sequence of Yersinia pestis strains Antiqua and Nepal516: evidence of gene reduction in an emerging pathogen.</title>
        <authorList>
            <person name="Chain P.S.G."/>
            <person name="Hu P."/>
            <person name="Malfatti S.A."/>
            <person name="Radnedge L."/>
            <person name="Larimer F."/>
            <person name="Vergez L.M."/>
            <person name="Worsham P."/>
            <person name="Chu M.C."/>
            <person name="Andersen G.L."/>
        </authorList>
    </citation>
    <scope>NUCLEOTIDE SEQUENCE [LARGE SCALE GENOMIC DNA]</scope>
    <source>
        <strain>Nepal516</strain>
    </source>
</reference>
<reference key="2">
    <citation type="submission" date="2009-04" db="EMBL/GenBank/DDBJ databases">
        <title>Yersinia pestis Nepal516A whole genome shotgun sequencing project.</title>
        <authorList>
            <person name="Plunkett G. III"/>
            <person name="Anderson B.D."/>
            <person name="Baumler D.J."/>
            <person name="Burland V."/>
            <person name="Cabot E.L."/>
            <person name="Glasner J.D."/>
            <person name="Mau B."/>
            <person name="Neeno-Eckwall E."/>
            <person name="Perna N.T."/>
            <person name="Munk A.C."/>
            <person name="Tapia R."/>
            <person name="Green L.D."/>
            <person name="Rogers Y.C."/>
            <person name="Detter J.C."/>
            <person name="Bruce D.C."/>
            <person name="Brettin T.S."/>
        </authorList>
    </citation>
    <scope>NUCLEOTIDE SEQUENCE [LARGE SCALE GENOMIC DNA]</scope>
    <source>
        <strain>Nepal516</strain>
    </source>
</reference>
<keyword id="KW-0686">Riboflavin biosynthesis</keyword>
<keyword id="KW-0808">Transferase</keyword>